<gene>
    <name evidence="1" type="primary">pyrB</name>
    <name type="ordered locus">PF0599</name>
</gene>
<dbReference type="EC" id="2.1.3.2" evidence="1"/>
<dbReference type="EMBL" id="AE009950">
    <property type="protein sequence ID" value="AAL80723.1"/>
    <property type="molecule type" value="Genomic_DNA"/>
</dbReference>
<dbReference type="RefSeq" id="WP_011011718.1">
    <property type="nucleotide sequence ID" value="NZ_CP023154.1"/>
</dbReference>
<dbReference type="SMR" id="Q8U373"/>
<dbReference type="STRING" id="186497.PF0599"/>
<dbReference type="PaxDb" id="186497-PF0599"/>
<dbReference type="GeneID" id="41712404"/>
<dbReference type="KEGG" id="pfu:PF0599"/>
<dbReference type="PATRIC" id="fig|186497.12.peg.628"/>
<dbReference type="eggNOG" id="arCOG00911">
    <property type="taxonomic scope" value="Archaea"/>
</dbReference>
<dbReference type="HOGENOM" id="CLU_043846_1_2_2"/>
<dbReference type="OrthoDB" id="7792at2157"/>
<dbReference type="PhylomeDB" id="Q8U373"/>
<dbReference type="UniPathway" id="UPA00070">
    <property type="reaction ID" value="UER00116"/>
</dbReference>
<dbReference type="Proteomes" id="UP000001013">
    <property type="component" value="Chromosome"/>
</dbReference>
<dbReference type="GO" id="GO:0016597">
    <property type="term" value="F:amino acid binding"/>
    <property type="evidence" value="ECO:0007669"/>
    <property type="project" value="InterPro"/>
</dbReference>
<dbReference type="GO" id="GO:0004070">
    <property type="term" value="F:aspartate carbamoyltransferase activity"/>
    <property type="evidence" value="ECO:0007669"/>
    <property type="project" value="UniProtKB-UniRule"/>
</dbReference>
<dbReference type="GO" id="GO:0006207">
    <property type="term" value="P:'de novo' pyrimidine nucleobase biosynthetic process"/>
    <property type="evidence" value="ECO:0007669"/>
    <property type="project" value="InterPro"/>
</dbReference>
<dbReference type="GO" id="GO:0044205">
    <property type="term" value="P:'de novo' UMP biosynthetic process"/>
    <property type="evidence" value="ECO:0007669"/>
    <property type="project" value="UniProtKB-UniRule"/>
</dbReference>
<dbReference type="GO" id="GO:0006520">
    <property type="term" value="P:amino acid metabolic process"/>
    <property type="evidence" value="ECO:0007669"/>
    <property type="project" value="InterPro"/>
</dbReference>
<dbReference type="FunFam" id="3.40.50.1370:FF:000001">
    <property type="entry name" value="Aspartate carbamoyltransferase"/>
    <property type="match status" value="1"/>
</dbReference>
<dbReference type="FunFam" id="3.40.50.1370:FF:000021">
    <property type="entry name" value="Aspartate carbamoyltransferase"/>
    <property type="match status" value="1"/>
</dbReference>
<dbReference type="Gene3D" id="3.40.50.1370">
    <property type="entry name" value="Aspartate/ornithine carbamoyltransferase"/>
    <property type="match status" value="2"/>
</dbReference>
<dbReference type="HAMAP" id="MF_00001">
    <property type="entry name" value="Asp_carb_tr"/>
    <property type="match status" value="1"/>
</dbReference>
<dbReference type="InterPro" id="IPR006132">
    <property type="entry name" value="Asp/Orn_carbamoyltranf_P-bd"/>
</dbReference>
<dbReference type="InterPro" id="IPR006130">
    <property type="entry name" value="Asp/Orn_carbamoylTrfase"/>
</dbReference>
<dbReference type="InterPro" id="IPR036901">
    <property type="entry name" value="Asp/Orn_carbamoylTrfase_sf"/>
</dbReference>
<dbReference type="InterPro" id="IPR002082">
    <property type="entry name" value="Asp_carbamoyltransf"/>
</dbReference>
<dbReference type="InterPro" id="IPR006131">
    <property type="entry name" value="Asp_carbamoyltransf_Asp/Orn-bd"/>
</dbReference>
<dbReference type="NCBIfam" id="TIGR00670">
    <property type="entry name" value="asp_carb_tr"/>
    <property type="match status" value="1"/>
</dbReference>
<dbReference type="NCBIfam" id="NF002032">
    <property type="entry name" value="PRK00856.1"/>
    <property type="match status" value="1"/>
</dbReference>
<dbReference type="PANTHER" id="PTHR45753:SF6">
    <property type="entry name" value="ASPARTATE CARBAMOYLTRANSFERASE"/>
    <property type="match status" value="1"/>
</dbReference>
<dbReference type="PANTHER" id="PTHR45753">
    <property type="entry name" value="ORNITHINE CARBAMOYLTRANSFERASE, MITOCHONDRIAL"/>
    <property type="match status" value="1"/>
</dbReference>
<dbReference type="Pfam" id="PF00185">
    <property type="entry name" value="OTCace"/>
    <property type="match status" value="1"/>
</dbReference>
<dbReference type="Pfam" id="PF02729">
    <property type="entry name" value="OTCace_N"/>
    <property type="match status" value="1"/>
</dbReference>
<dbReference type="PRINTS" id="PR00100">
    <property type="entry name" value="AOTCASE"/>
</dbReference>
<dbReference type="PRINTS" id="PR00101">
    <property type="entry name" value="ATCASE"/>
</dbReference>
<dbReference type="SUPFAM" id="SSF53671">
    <property type="entry name" value="Aspartate/ornithine carbamoyltransferase"/>
    <property type="match status" value="1"/>
</dbReference>
<dbReference type="PROSITE" id="PS00097">
    <property type="entry name" value="CARBAMOYLTRANSFERASE"/>
    <property type="match status" value="1"/>
</dbReference>
<evidence type="ECO:0000255" key="1">
    <source>
        <dbReference type="HAMAP-Rule" id="MF_00001"/>
    </source>
</evidence>
<protein>
    <recommendedName>
        <fullName evidence="1">Aspartate carbamoyltransferase catalytic subunit</fullName>
        <ecNumber evidence="1">2.1.3.2</ecNumber>
    </recommendedName>
    <alternativeName>
        <fullName evidence="1">Aspartate transcarbamylase</fullName>
        <shortName evidence="1">ATCase</shortName>
    </alternativeName>
</protein>
<name>PYRB_PYRFU</name>
<organism>
    <name type="scientific">Pyrococcus furiosus (strain ATCC 43587 / DSM 3638 / JCM 8422 / Vc1)</name>
    <dbReference type="NCBI Taxonomy" id="186497"/>
    <lineage>
        <taxon>Archaea</taxon>
        <taxon>Methanobacteriati</taxon>
        <taxon>Methanobacteriota</taxon>
        <taxon>Thermococci</taxon>
        <taxon>Thermococcales</taxon>
        <taxon>Thermococcaceae</taxon>
        <taxon>Pyrococcus</taxon>
    </lineage>
</organism>
<comment type="function">
    <text evidence="1">Catalyzes the condensation of carbamoyl phosphate and aspartate to form carbamoyl aspartate and inorganic phosphate, the committed step in the de novo pyrimidine nucleotide biosynthesis pathway.</text>
</comment>
<comment type="catalytic activity">
    <reaction evidence="1">
        <text>carbamoyl phosphate + L-aspartate = N-carbamoyl-L-aspartate + phosphate + H(+)</text>
        <dbReference type="Rhea" id="RHEA:20013"/>
        <dbReference type="ChEBI" id="CHEBI:15378"/>
        <dbReference type="ChEBI" id="CHEBI:29991"/>
        <dbReference type="ChEBI" id="CHEBI:32814"/>
        <dbReference type="ChEBI" id="CHEBI:43474"/>
        <dbReference type="ChEBI" id="CHEBI:58228"/>
        <dbReference type="EC" id="2.1.3.2"/>
    </reaction>
</comment>
<comment type="pathway">
    <text evidence="1">Pyrimidine metabolism; UMP biosynthesis via de novo pathway; (S)-dihydroorotate from bicarbonate: step 2/3.</text>
</comment>
<comment type="subunit">
    <text evidence="1">Heterooligomer of catalytic and regulatory chains.</text>
</comment>
<comment type="similarity">
    <text evidence="1">Belongs to the aspartate/ornithine carbamoyltransferase superfamily. ATCase family.</text>
</comment>
<proteinExistence type="inferred from homology"/>
<sequence>MDWKGRDVISIRDFSKEDIEIVLSTAERLEKELKEKGQLEYARGKILATLFFEPSTRTRLSFESAMHRLGGAVIGFAEASTSSVKKGESLADTIKTVEQYSDVIVIRHPKEGAARLAAEVAEIPVINAGDGSNQHPTQTLLDLYTIRKEFGKIDGLKIGLLGDLKYGRTVHSLAEALAYYDVELYLISPELLRMPRHIVEELREKGVTVYETSDLMSVIGELDVLYVTRIQKERFPDEQEYLKVRGSYQVNLQVLSKAKETLKVMHPLPRVDEIHPEVDKTKHAIYFKQVFNGIPVRMALLGLVLGVI</sequence>
<reference key="1">
    <citation type="journal article" date="1999" name="Genetics">
        <title>Divergence of the hyperthermophilic archaea Pyrococcus furiosus and P. horikoshii inferred from complete genomic sequences.</title>
        <authorList>
            <person name="Maeder D.L."/>
            <person name="Weiss R.B."/>
            <person name="Dunn D.M."/>
            <person name="Cherry J.L."/>
            <person name="Gonzalez J.M."/>
            <person name="DiRuggiero J."/>
            <person name="Robb F.T."/>
        </authorList>
    </citation>
    <scope>NUCLEOTIDE SEQUENCE [LARGE SCALE GENOMIC DNA]</scope>
    <source>
        <strain>ATCC 43587 / DSM 3638 / JCM 8422 / Vc1</strain>
    </source>
</reference>
<accession>Q8U373</accession>
<keyword id="KW-0665">Pyrimidine biosynthesis</keyword>
<keyword id="KW-1185">Reference proteome</keyword>
<keyword id="KW-0808">Transferase</keyword>
<feature type="chain" id="PRO_0000113255" description="Aspartate carbamoyltransferase catalytic subunit">
    <location>
        <begin position="1"/>
        <end position="308"/>
    </location>
</feature>
<feature type="binding site" evidence="1">
    <location>
        <position position="57"/>
    </location>
    <ligand>
        <name>carbamoyl phosphate</name>
        <dbReference type="ChEBI" id="CHEBI:58228"/>
    </ligand>
</feature>
<feature type="binding site" evidence="1">
    <location>
        <position position="58"/>
    </location>
    <ligand>
        <name>carbamoyl phosphate</name>
        <dbReference type="ChEBI" id="CHEBI:58228"/>
    </ligand>
</feature>
<feature type="binding site" evidence="1">
    <location>
        <position position="86"/>
    </location>
    <ligand>
        <name>L-aspartate</name>
        <dbReference type="ChEBI" id="CHEBI:29991"/>
    </ligand>
</feature>
<feature type="binding site" evidence="1">
    <location>
        <position position="107"/>
    </location>
    <ligand>
        <name>carbamoyl phosphate</name>
        <dbReference type="ChEBI" id="CHEBI:58228"/>
    </ligand>
</feature>
<feature type="binding site" evidence="1">
    <location>
        <position position="135"/>
    </location>
    <ligand>
        <name>carbamoyl phosphate</name>
        <dbReference type="ChEBI" id="CHEBI:58228"/>
    </ligand>
</feature>
<feature type="binding site" evidence="1">
    <location>
        <position position="138"/>
    </location>
    <ligand>
        <name>carbamoyl phosphate</name>
        <dbReference type="ChEBI" id="CHEBI:58228"/>
    </ligand>
</feature>
<feature type="binding site" evidence="1">
    <location>
        <position position="168"/>
    </location>
    <ligand>
        <name>L-aspartate</name>
        <dbReference type="ChEBI" id="CHEBI:29991"/>
    </ligand>
</feature>
<feature type="binding site" evidence="1">
    <location>
        <position position="229"/>
    </location>
    <ligand>
        <name>L-aspartate</name>
        <dbReference type="ChEBI" id="CHEBI:29991"/>
    </ligand>
</feature>
<feature type="binding site" evidence="1">
    <location>
        <position position="268"/>
    </location>
    <ligand>
        <name>carbamoyl phosphate</name>
        <dbReference type="ChEBI" id="CHEBI:58228"/>
    </ligand>
</feature>
<feature type="binding site" evidence="1">
    <location>
        <position position="269"/>
    </location>
    <ligand>
        <name>carbamoyl phosphate</name>
        <dbReference type="ChEBI" id="CHEBI:58228"/>
    </ligand>
</feature>